<gene>
    <name type="primary">smyd2b</name>
    <name type="ORF">si:dkey-121j17.3</name>
</gene>
<sequence>MMKAEGIPGIEQFASPGKGRGLRVSRAYGVGELLFSCPAYSYVLSVGERGLICEQCFTRKKGLAKCGKCKKAFYCNANCQKKNWPMHKLECQAMCAFGENWRPSETVRLVARIIARLKAQKERSPSEILLLLGEMEAHLEDMDNEKREMTEAHIAGLHQFYSKHLDFPDHQALLTLFSQVHCNGFTVEDEELSNLGLAIFPDIALLNHSCSPNVIVTYRGINAEVRAVKDISPGQEIYTSYIDLLYPTADRLERLRDMYYFSCDCKECTTKSMDVVKMSVRKRSDEIGEKEIKDMVRYARNSMENFRRAKQDKSPTELLEMCELSIDKMSTVFDDSNVYILHMMYQAMGICLFTEDYEGAVRYGEKVIKPFTVLYPAYSMNVASMFLKLGRLYIALDRKLAGIDAFQKALTIMEVVHGKDHTYVTELKQEMRDF</sequence>
<protein>
    <recommendedName>
        <fullName>N-lysine methyltransferase SMYD2-B</fullName>
        <ecNumber evidence="2">2.1.1.-</ecNumber>
    </recommendedName>
    <alternativeName>
        <fullName>Histone methyltransferase SMYD2-B</fullName>
        <ecNumber evidence="5">2.1.1.354</ecNumber>
    </alternativeName>
    <alternativeName>
        <fullName>SET and MYND domain-containing protein 2B</fullName>
    </alternativeName>
</protein>
<name>SMY2B_DANRE</name>
<reference key="1">
    <citation type="journal article" date="2013" name="Nature">
        <title>The zebrafish reference genome sequence and its relationship to the human genome.</title>
        <authorList>
            <person name="Howe K."/>
            <person name="Clark M.D."/>
            <person name="Torroja C.F."/>
            <person name="Torrance J."/>
            <person name="Berthelot C."/>
            <person name="Muffato M."/>
            <person name="Collins J.E."/>
            <person name="Humphray S."/>
            <person name="McLaren K."/>
            <person name="Matthews L."/>
            <person name="McLaren S."/>
            <person name="Sealy I."/>
            <person name="Caccamo M."/>
            <person name="Churcher C."/>
            <person name="Scott C."/>
            <person name="Barrett J.C."/>
            <person name="Koch R."/>
            <person name="Rauch G.J."/>
            <person name="White S."/>
            <person name="Chow W."/>
            <person name="Kilian B."/>
            <person name="Quintais L.T."/>
            <person name="Guerra-Assuncao J.A."/>
            <person name="Zhou Y."/>
            <person name="Gu Y."/>
            <person name="Yen J."/>
            <person name="Vogel J.H."/>
            <person name="Eyre T."/>
            <person name="Redmond S."/>
            <person name="Banerjee R."/>
            <person name="Chi J."/>
            <person name="Fu B."/>
            <person name="Langley E."/>
            <person name="Maguire S.F."/>
            <person name="Laird G.K."/>
            <person name="Lloyd D."/>
            <person name="Kenyon E."/>
            <person name="Donaldson S."/>
            <person name="Sehra H."/>
            <person name="Almeida-King J."/>
            <person name="Loveland J."/>
            <person name="Trevanion S."/>
            <person name="Jones M."/>
            <person name="Quail M."/>
            <person name="Willey D."/>
            <person name="Hunt A."/>
            <person name="Burton J."/>
            <person name="Sims S."/>
            <person name="McLay K."/>
            <person name="Plumb B."/>
            <person name="Davis J."/>
            <person name="Clee C."/>
            <person name="Oliver K."/>
            <person name="Clark R."/>
            <person name="Riddle C."/>
            <person name="Elliot D."/>
            <person name="Threadgold G."/>
            <person name="Harden G."/>
            <person name="Ware D."/>
            <person name="Begum S."/>
            <person name="Mortimore B."/>
            <person name="Kerry G."/>
            <person name="Heath P."/>
            <person name="Phillimore B."/>
            <person name="Tracey A."/>
            <person name="Corby N."/>
            <person name="Dunn M."/>
            <person name="Johnson C."/>
            <person name="Wood J."/>
            <person name="Clark S."/>
            <person name="Pelan S."/>
            <person name="Griffiths G."/>
            <person name="Smith M."/>
            <person name="Glithero R."/>
            <person name="Howden P."/>
            <person name="Barker N."/>
            <person name="Lloyd C."/>
            <person name="Stevens C."/>
            <person name="Harley J."/>
            <person name="Holt K."/>
            <person name="Panagiotidis G."/>
            <person name="Lovell J."/>
            <person name="Beasley H."/>
            <person name="Henderson C."/>
            <person name="Gordon D."/>
            <person name="Auger K."/>
            <person name="Wright D."/>
            <person name="Collins J."/>
            <person name="Raisen C."/>
            <person name="Dyer L."/>
            <person name="Leung K."/>
            <person name="Robertson L."/>
            <person name="Ambridge K."/>
            <person name="Leongamornlert D."/>
            <person name="McGuire S."/>
            <person name="Gilderthorp R."/>
            <person name="Griffiths C."/>
            <person name="Manthravadi D."/>
            <person name="Nichol S."/>
            <person name="Barker G."/>
            <person name="Whitehead S."/>
            <person name="Kay M."/>
            <person name="Brown J."/>
            <person name="Murnane C."/>
            <person name="Gray E."/>
            <person name="Humphries M."/>
            <person name="Sycamore N."/>
            <person name="Barker D."/>
            <person name="Saunders D."/>
            <person name="Wallis J."/>
            <person name="Babbage A."/>
            <person name="Hammond S."/>
            <person name="Mashreghi-Mohammadi M."/>
            <person name="Barr L."/>
            <person name="Martin S."/>
            <person name="Wray P."/>
            <person name="Ellington A."/>
            <person name="Matthews N."/>
            <person name="Ellwood M."/>
            <person name="Woodmansey R."/>
            <person name="Clark G."/>
            <person name="Cooper J."/>
            <person name="Tromans A."/>
            <person name="Grafham D."/>
            <person name="Skuce C."/>
            <person name="Pandian R."/>
            <person name="Andrews R."/>
            <person name="Harrison E."/>
            <person name="Kimberley A."/>
            <person name="Garnett J."/>
            <person name="Fosker N."/>
            <person name="Hall R."/>
            <person name="Garner P."/>
            <person name="Kelly D."/>
            <person name="Bird C."/>
            <person name="Palmer S."/>
            <person name="Gehring I."/>
            <person name="Berger A."/>
            <person name="Dooley C.M."/>
            <person name="Ersan-Urun Z."/>
            <person name="Eser C."/>
            <person name="Geiger H."/>
            <person name="Geisler M."/>
            <person name="Karotki L."/>
            <person name="Kirn A."/>
            <person name="Konantz J."/>
            <person name="Konantz M."/>
            <person name="Oberlander M."/>
            <person name="Rudolph-Geiger S."/>
            <person name="Teucke M."/>
            <person name="Lanz C."/>
            <person name="Raddatz G."/>
            <person name="Osoegawa K."/>
            <person name="Zhu B."/>
            <person name="Rapp A."/>
            <person name="Widaa S."/>
            <person name="Langford C."/>
            <person name="Yang F."/>
            <person name="Schuster S.C."/>
            <person name="Carter N.P."/>
            <person name="Harrow J."/>
            <person name="Ning Z."/>
            <person name="Herrero J."/>
            <person name="Searle S.M."/>
            <person name="Enright A."/>
            <person name="Geisler R."/>
            <person name="Plasterk R.H."/>
            <person name="Lee C."/>
            <person name="Westerfield M."/>
            <person name="de Jong P.J."/>
            <person name="Zon L.I."/>
            <person name="Postlethwait J.H."/>
            <person name="Nusslein-Volhard C."/>
            <person name="Hubbard T.J."/>
            <person name="Roest Crollius H."/>
            <person name="Rogers J."/>
            <person name="Stemple D.L."/>
        </authorList>
    </citation>
    <scope>NUCLEOTIDE SEQUENCE [LARGE SCALE GENOMIC DNA]</scope>
    <source>
        <strain>Tuebingen</strain>
    </source>
</reference>
<reference key="2">
    <citation type="submission" date="2006-05" db="EMBL/GenBank/DDBJ databases">
        <authorList>
            <consortium name="NIH - Zebrafish Gene Collection (ZGC) project"/>
        </authorList>
    </citation>
    <scope>NUCLEOTIDE SEQUENCE [LARGE SCALE MRNA] (ISOFORM 2)</scope>
</reference>
<reference key="3">
    <citation type="journal article" date="2006" name="Proc. Natl. Acad. Sci. U.S.A.">
        <title>SmyD1, a histone methyltransferase, is required for myofibril organization and muscle contraction in zebrafish embryos.</title>
        <authorList>
            <person name="Tan X."/>
            <person name="Rotllant J."/>
            <person name="Li H."/>
            <person name="De Deyne P."/>
            <person name="DeDeyne P."/>
            <person name="Du S.J."/>
        </authorList>
    </citation>
    <scope>FUNCTION</scope>
    <scope>CATALYTIC ACTIVITY</scope>
</reference>
<accession>Q5RGL7</accession>
<accession>Q1JPT4</accession>
<dbReference type="EC" id="2.1.1.-" evidence="2"/>
<dbReference type="EC" id="2.1.1.354" evidence="5"/>
<dbReference type="EMBL" id="BX855610">
    <property type="protein sequence ID" value="CAI20605.1"/>
    <property type="status" value="ALT_SEQ"/>
    <property type="molecule type" value="Genomic_DNA"/>
</dbReference>
<dbReference type="EMBL" id="BC116606">
    <property type="protein sequence ID" value="AAI16607.1"/>
    <property type="molecule type" value="mRNA"/>
</dbReference>
<dbReference type="RefSeq" id="NP_001038756.1">
    <molecule id="Q5RGL7-2"/>
    <property type="nucleotide sequence ID" value="NM_001045291.1"/>
</dbReference>
<dbReference type="RefSeq" id="XP_005164480.1">
    <molecule id="Q5RGL7-1"/>
    <property type="nucleotide sequence ID" value="XM_005164423.5"/>
</dbReference>
<dbReference type="SMR" id="Q5RGL7"/>
<dbReference type="FunCoup" id="Q5RGL7">
    <property type="interactions" value="1436"/>
</dbReference>
<dbReference type="STRING" id="7955.ENSDARP00000005268"/>
<dbReference type="PaxDb" id="7955-ENSDARP00000005268"/>
<dbReference type="Ensembl" id="ENSDART00000162198">
    <molecule id="Q5RGL7-1"/>
    <property type="protein sequence ID" value="ENSDARP00000133013"/>
    <property type="gene ID" value="ENSDARG00000005629"/>
</dbReference>
<dbReference type="GeneID" id="568616"/>
<dbReference type="KEGG" id="dre:568616"/>
<dbReference type="AGR" id="ZFIN:ZDB-GENE-041001-201"/>
<dbReference type="CTD" id="568616"/>
<dbReference type="ZFIN" id="ZDB-GENE-041001-201">
    <property type="gene designation" value="smyd2b"/>
</dbReference>
<dbReference type="eggNOG" id="KOG2084">
    <property type="taxonomic scope" value="Eukaryota"/>
</dbReference>
<dbReference type="HOGENOM" id="CLU_018406_0_0_1"/>
<dbReference type="InParanoid" id="Q5RGL7"/>
<dbReference type="OrthoDB" id="5945798at2759"/>
<dbReference type="PhylomeDB" id="Q5RGL7"/>
<dbReference type="TreeFam" id="TF106487"/>
<dbReference type="PRO" id="PR:Q5RGL7"/>
<dbReference type="Proteomes" id="UP000000437">
    <property type="component" value="Chromosome 20"/>
</dbReference>
<dbReference type="Bgee" id="ENSDARG00000005629">
    <property type="expression patterns" value="Expressed in muscle tissue and 11 other cell types or tissues"/>
</dbReference>
<dbReference type="ExpressionAtlas" id="Q5RGL7">
    <property type="expression patterns" value="differential"/>
</dbReference>
<dbReference type="GO" id="GO:0005737">
    <property type="term" value="C:cytoplasm"/>
    <property type="evidence" value="ECO:0000250"/>
    <property type="project" value="UniProtKB"/>
</dbReference>
<dbReference type="GO" id="GO:0005829">
    <property type="term" value="C:cytosol"/>
    <property type="evidence" value="ECO:0000250"/>
    <property type="project" value="UniProtKB"/>
</dbReference>
<dbReference type="GO" id="GO:0005634">
    <property type="term" value="C:nucleus"/>
    <property type="evidence" value="ECO:0000250"/>
    <property type="project" value="UniProtKB"/>
</dbReference>
<dbReference type="GO" id="GO:0046975">
    <property type="term" value="F:histone H3K36 methyltransferase activity"/>
    <property type="evidence" value="ECO:0000250"/>
    <property type="project" value="UniProtKB"/>
</dbReference>
<dbReference type="GO" id="GO:0140999">
    <property type="term" value="F:histone H3K4 trimethyltransferase activity"/>
    <property type="evidence" value="ECO:0007669"/>
    <property type="project" value="UniProtKB-EC"/>
</dbReference>
<dbReference type="GO" id="GO:0016279">
    <property type="term" value="F:protein-lysine N-methyltransferase activity"/>
    <property type="evidence" value="ECO:0000250"/>
    <property type="project" value="UniProtKB"/>
</dbReference>
<dbReference type="GO" id="GO:0000993">
    <property type="term" value="F:RNA polymerase II complex binding"/>
    <property type="evidence" value="ECO:0000250"/>
    <property type="project" value="UniProtKB"/>
</dbReference>
<dbReference type="GO" id="GO:0008270">
    <property type="term" value="F:zinc ion binding"/>
    <property type="evidence" value="ECO:0007669"/>
    <property type="project" value="UniProtKB-KW"/>
</dbReference>
<dbReference type="GO" id="GO:0060047">
    <property type="term" value="P:heart contraction"/>
    <property type="evidence" value="ECO:0000316"/>
    <property type="project" value="ZFIN"/>
</dbReference>
<dbReference type="GO" id="GO:0007507">
    <property type="term" value="P:heart development"/>
    <property type="evidence" value="ECO:0000316"/>
    <property type="project" value="ZFIN"/>
</dbReference>
<dbReference type="GO" id="GO:0008285">
    <property type="term" value="P:negative regulation of cell population proliferation"/>
    <property type="evidence" value="ECO:0000250"/>
    <property type="project" value="UniProtKB"/>
</dbReference>
<dbReference type="GO" id="GO:0000122">
    <property type="term" value="P:negative regulation of transcription by RNA polymerase II"/>
    <property type="evidence" value="ECO:0000250"/>
    <property type="project" value="UniProtKB"/>
</dbReference>
<dbReference type="GO" id="GO:0018027">
    <property type="term" value="P:peptidyl-lysine dimethylation"/>
    <property type="evidence" value="ECO:0000250"/>
    <property type="project" value="UniProtKB"/>
</dbReference>
<dbReference type="GO" id="GO:0018026">
    <property type="term" value="P:peptidyl-lysine monomethylation"/>
    <property type="evidence" value="ECO:0000250"/>
    <property type="project" value="UniProtKB"/>
</dbReference>
<dbReference type="GO" id="GO:0043516">
    <property type="term" value="P:regulation of DNA damage response, signal transduction by p53 class mediator"/>
    <property type="evidence" value="ECO:0000250"/>
    <property type="project" value="UniProtKB"/>
</dbReference>
<dbReference type="FunFam" id="2.170.270.10:FF:000013">
    <property type="entry name" value="Histone-lysine N-methyltransferase SMYD1 isoform 1"/>
    <property type="match status" value="1"/>
</dbReference>
<dbReference type="FunFam" id="1.25.40.970:FF:000002">
    <property type="entry name" value="N-lysine methyltransferase SMYD2 isoform X1"/>
    <property type="match status" value="1"/>
</dbReference>
<dbReference type="FunFam" id="6.10.140.2220:FF:000013">
    <property type="entry name" value="N-lysine methyltransferase SMYD2 isoform X1"/>
    <property type="match status" value="1"/>
</dbReference>
<dbReference type="Gene3D" id="1.10.220.160">
    <property type="match status" value="1"/>
</dbReference>
<dbReference type="Gene3D" id="1.25.40.970">
    <property type="match status" value="1"/>
</dbReference>
<dbReference type="Gene3D" id="6.10.140.2220">
    <property type="match status" value="1"/>
</dbReference>
<dbReference type="Gene3D" id="2.170.270.10">
    <property type="entry name" value="SET domain"/>
    <property type="match status" value="1"/>
</dbReference>
<dbReference type="Gene3D" id="1.25.40.10">
    <property type="entry name" value="Tetratricopeptide repeat domain"/>
    <property type="match status" value="1"/>
</dbReference>
<dbReference type="InterPro" id="IPR050869">
    <property type="entry name" value="H3K4_H4K5_MeTrfase"/>
</dbReference>
<dbReference type="InterPro" id="IPR001214">
    <property type="entry name" value="SET_dom"/>
</dbReference>
<dbReference type="InterPro" id="IPR046341">
    <property type="entry name" value="SET_dom_sf"/>
</dbReference>
<dbReference type="InterPro" id="IPR011990">
    <property type="entry name" value="TPR-like_helical_dom_sf"/>
</dbReference>
<dbReference type="InterPro" id="IPR002893">
    <property type="entry name" value="Znf_MYND"/>
</dbReference>
<dbReference type="PANTHER" id="PTHR12197">
    <property type="entry name" value="HISTONE-LYSINE N-METHYLTRANSFERASE SMYD"/>
    <property type="match status" value="1"/>
</dbReference>
<dbReference type="PANTHER" id="PTHR12197:SF290">
    <property type="entry name" value="N-LYSINE METHYLTRANSFERASE SMYD2-B"/>
    <property type="match status" value="1"/>
</dbReference>
<dbReference type="Pfam" id="PF00856">
    <property type="entry name" value="SET"/>
    <property type="match status" value="1"/>
</dbReference>
<dbReference type="Pfam" id="PF01753">
    <property type="entry name" value="zf-MYND"/>
    <property type="match status" value="1"/>
</dbReference>
<dbReference type="SMART" id="SM00317">
    <property type="entry name" value="SET"/>
    <property type="match status" value="1"/>
</dbReference>
<dbReference type="SUPFAM" id="SSF82199">
    <property type="entry name" value="SET domain"/>
    <property type="match status" value="1"/>
</dbReference>
<dbReference type="PROSITE" id="PS50280">
    <property type="entry name" value="SET"/>
    <property type="match status" value="1"/>
</dbReference>
<dbReference type="PROSITE" id="PS01360">
    <property type="entry name" value="ZF_MYND_1"/>
    <property type="match status" value="1"/>
</dbReference>
<dbReference type="PROSITE" id="PS50865">
    <property type="entry name" value="ZF_MYND_2"/>
    <property type="match status" value="1"/>
</dbReference>
<evidence type="ECO:0000250" key="1"/>
<evidence type="ECO:0000250" key="2">
    <source>
        <dbReference type="UniProtKB" id="Q9NRG4"/>
    </source>
</evidence>
<evidence type="ECO:0000255" key="3">
    <source>
        <dbReference type="PROSITE-ProRule" id="PRU00134"/>
    </source>
</evidence>
<evidence type="ECO:0000255" key="4">
    <source>
        <dbReference type="PROSITE-ProRule" id="PRU00190"/>
    </source>
</evidence>
<evidence type="ECO:0000269" key="5">
    <source>
    </source>
</evidence>
<evidence type="ECO:0000303" key="6">
    <source ref="2"/>
</evidence>
<evidence type="ECO:0000305" key="7"/>
<keyword id="KW-0025">Alternative splicing</keyword>
<keyword id="KW-0156">Chromatin regulator</keyword>
<keyword id="KW-0963">Cytoplasm</keyword>
<keyword id="KW-0479">Metal-binding</keyword>
<keyword id="KW-0489">Methyltransferase</keyword>
<keyword id="KW-0539">Nucleus</keyword>
<keyword id="KW-1185">Reference proteome</keyword>
<keyword id="KW-0949">S-adenosyl-L-methionine</keyword>
<keyword id="KW-0804">Transcription</keyword>
<keyword id="KW-0805">Transcription regulation</keyword>
<keyword id="KW-0808">Transferase</keyword>
<keyword id="KW-0862">Zinc</keyword>
<keyword id="KW-0863">Zinc-finger</keyword>
<organism>
    <name type="scientific">Danio rerio</name>
    <name type="common">Zebrafish</name>
    <name type="synonym">Brachydanio rerio</name>
    <dbReference type="NCBI Taxonomy" id="7955"/>
    <lineage>
        <taxon>Eukaryota</taxon>
        <taxon>Metazoa</taxon>
        <taxon>Chordata</taxon>
        <taxon>Craniata</taxon>
        <taxon>Vertebrata</taxon>
        <taxon>Euteleostomi</taxon>
        <taxon>Actinopterygii</taxon>
        <taxon>Neopterygii</taxon>
        <taxon>Teleostei</taxon>
        <taxon>Ostariophysi</taxon>
        <taxon>Cypriniformes</taxon>
        <taxon>Danionidae</taxon>
        <taxon>Danioninae</taxon>
        <taxon>Danio</taxon>
    </lineage>
</organism>
<proteinExistence type="evidence at protein level"/>
<feature type="chain" id="PRO_0000405849" description="N-lysine methyltransferase SMYD2-B">
    <location>
        <begin position="1"/>
        <end position="434"/>
    </location>
</feature>
<feature type="domain" description="SET" evidence="4">
    <location>
        <begin position="8"/>
        <end position="242"/>
    </location>
</feature>
<feature type="zinc finger region" description="MYND-type" evidence="3">
    <location>
        <begin position="53"/>
        <end position="91"/>
    </location>
</feature>
<feature type="binding site" evidence="1">
    <location>
        <begin position="18"/>
        <end position="20"/>
    </location>
    <ligand>
        <name>S-adenosyl-L-methionine</name>
        <dbReference type="ChEBI" id="CHEBI:59789"/>
    </ligand>
</feature>
<feature type="binding site" evidence="3">
    <location>
        <position position="53"/>
    </location>
    <ligand>
        <name>Zn(2+)</name>
        <dbReference type="ChEBI" id="CHEBI:29105"/>
        <label>1</label>
    </ligand>
</feature>
<feature type="binding site" evidence="3">
    <location>
        <position position="56"/>
    </location>
    <ligand>
        <name>Zn(2+)</name>
        <dbReference type="ChEBI" id="CHEBI:29105"/>
        <label>1</label>
    </ligand>
</feature>
<feature type="binding site" evidence="3">
    <location>
        <position position="66"/>
    </location>
    <ligand>
        <name>Zn(2+)</name>
        <dbReference type="ChEBI" id="CHEBI:29105"/>
        <label>2</label>
    </ligand>
</feature>
<feature type="binding site" evidence="3">
    <location>
        <position position="69"/>
    </location>
    <ligand>
        <name>Zn(2+)</name>
        <dbReference type="ChEBI" id="CHEBI:29105"/>
        <label>2</label>
    </ligand>
</feature>
<feature type="binding site" evidence="3">
    <location>
        <position position="75"/>
    </location>
    <ligand>
        <name>Zn(2+)</name>
        <dbReference type="ChEBI" id="CHEBI:29105"/>
        <label>1</label>
    </ligand>
</feature>
<feature type="binding site" evidence="3">
    <location>
        <position position="79"/>
    </location>
    <ligand>
        <name>Zn(2+)</name>
        <dbReference type="ChEBI" id="CHEBI:29105"/>
        <label>1</label>
    </ligand>
</feature>
<feature type="binding site" evidence="3">
    <location>
        <position position="87"/>
    </location>
    <ligand>
        <name>Zn(2+)</name>
        <dbReference type="ChEBI" id="CHEBI:29105"/>
        <label>2</label>
    </ligand>
</feature>
<feature type="binding site" evidence="3">
    <location>
        <position position="91"/>
    </location>
    <ligand>
        <name>Zn(2+)</name>
        <dbReference type="ChEBI" id="CHEBI:29105"/>
        <label>2</label>
    </ligand>
</feature>
<feature type="binding site" evidence="4">
    <location>
        <position position="138"/>
    </location>
    <ligand>
        <name>S-adenosyl-L-methionine</name>
        <dbReference type="ChEBI" id="CHEBI:59789"/>
    </ligand>
</feature>
<feature type="binding site" evidence="1">
    <location>
        <begin position="207"/>
        <end position="208"/>
    </location>
    <ligand>
        <name>S-adenosyl-L-methionine</name>
        <dbReference type="ChEBI" id="CHEBI:59789"/>
    </ligand>
</feature>
<feature type="binding site" evidence="1">
    <location>
        <begin position="259"/>
        <end position="261"/>
    </location>
    <ligand>
        <name>S-adenosyl-L-methionine</name>
        <dbReference type="ChEBI" id="CHEBI:59789"/>
    </ligand>
</feature>
<feature type="splice variant" id="VSP_040727" description="In isoform 2." evidence="6">
    <location>
        <begin position="107"/>
        <end position="117"/>
    </location>
</feature>
<comment type="function">
    <text evidence="2">Protein-lysine N-methyltransferase that methylates both histones and non-histone proteins, including p53/TP53 and RB1. Specifically trimethylates histone H3 'Lys-4' (H3K4me3) in vivo. The activity requires interaction with HSP90alpha. Shows even higher methyltransferase activity on p53/TP53. Monomethylates 'Lys-370' of p53/TP53, leading to decreased DNA-binding activity and subsequent transcriptional regulation activity of p53/TP53. Monomethylates RB1 at 'Lys-860'.</text>
</comment>
<comment type="catalytic activity">
    <reaction evidence="5">
        <text>L-lysyl(4)-[histone H3] + 3 S-adenosyl-L-methionine = N(6),N(6),N(6)-trimethyl-L-lysyl(4)-[histone H3] + 3 S-adenosyl-L-homocysteine + 3 H(+)</text>
        <dbReference type="Rhea" id="RHEA:60260"/>
        <dbReference type="Rhea" id="RHEA-COMP:15537"/>
        <dbReference type="Rhea" id="RHEA-COMP:15547"/>
        <dbReference type="ChEBI" id="CHEBI:15378"/>
        <dbReference type="ChEBI" id="CHEBI:29969"/>
        <dbReference type="ChEBI" id="CHEBI:57856"/>
        <dbReference type="ChEBI" id="CHEBI:59789"/>
        <dbReference type="ChEBI" id="CHEBI:61961"/>
        <dbReference type="EC" id="2.1.1.354"/>
    </reaction>
</comment>
<comment type="catalytic activity">
    <reaction evidence="2">
        <text>L-lysyl-[protein] + S-adenosyl-L-methionine = N(6)-methyl-L-lysyl-[protein] + S-adenosyl-L-homocysteine + H(+)</text>
        <dbReference type="Rhea" id="RHEA:51736"/>
        <dbReference type="Rhea" id="RHEA-COMP:9752"/>
        <dbReference type="Rhea" id="RHEA-COMP:13053"/>
        <dbReference type="ChEBI" id="CHEBI:15378"/>
        <dbReference type="ChEBI" id="CHEBI:29969"/>
        <dbReference type="ChEBI" id="CHEBI:57856"/>
        <dbReference type="ChEBI" id="CHEBI:59789"/>
        <dbReference type="ChEBI" id="CHEBI:61929"/>
    </reaction>
</comment>
<comment type="subcellular location">
    <subcellularLocation>
        <location evidence="1">Cytoplasm</location>
        <location evidence="1">Cytosol</location>
    </subcellularLocation>
    <subcellularLocation>
        <location evidence="1">Nucleus</location>
    </subcellularLocation>
</comment>
<comment type="alternative products">
    <event type="alternative splicing"/>
    <isoform>
        <id>Q5RGL7-1</id>
        <name>1</name>
        <sequence type="displayed"/>
    </isoform>
    <isoform>
        <id>Q5RGL7-2</id>
        <name>2</name>
        <sequence type="described" ref="VSP_040727"/>
    </isoform>
</comment>
<comment type="similarity">
    <text evidence="4">Belongs to the class V-like SAM-binding methyltransferase superfamily.</text>
</comment>
<comment type="sequence caution" evidence="7">
    <conflict type="erroneous gene model prediction">
        <sequence resource="EMBL-CDS" id="CAI20605"/>
    </conflict>
</comment>